<evidence type="ECO:0000255" key="1">
    <source>
        <dbReference type="HAMAP-Rule" id="MF_01317"/>
    </source>
</evidence>
<feature type="chain" id="PRO_0000219762" description="Photosystem II reaction center protein L">
    <location>
        <begin position="1"/>
        <end position="38"/>
    </location>
</feature>
<feature type="transmembrane region" description="Helical" evidence="1">
    <location>
        <begin position="17"/>
        <end position="37"/>
    </location>
</feature>
<accession>P51389</accession>
<name>PSBL_PORPU</name>
<dbReference type="EMBL" id="U38804">
    <property type="protein sequence ID" value="AAC08275.1"/>
    <property type="molecule type" value="Genomic_DNA"/>
</dbReference>
<dbReference type="PIR" id="S73310">
    <property type="entry name" value="S73310"/>
</dbReference>
<dbReference type="RefSeq" id="NP_053999.1">
    <property type="nucleotide sequence ID" value="NC_000925.1"/>
</dbReference>
<dbReference type="SMR" id="P51389"/>
<dbReference type="GeneID" id="810030"/>
<dbReference type="GO" id="GO:0009535">
    <property type="term" value="C:chloroplast thylakoid membrane"/>
    <property type="evidence" value="ECO:0007669"/>
    <property type="project" value="UniProtKB-SubCell"/>
</dbReference>
<dbReference type="GO" id="GO:0009539">
    <property type="term" value="C:photosystem II reaction center"/>
    <property type="evidence" value="ECO:0007669"/>
    <property type="project" value="InterPro"/>
</dbReference>
<dbReference type="GO" id="GO:0015979">
    <property type="term" value="P:photosynthesis"/>
    <property type="evidence" value="ECO:0007669"/>
    <property type="project" value="UniProtKB-UniRule"/>
</dbReference>
<dbReference type="HAMAP" id="MF_01317">
    <property type="entry name" value="PSII_PsbL"/>
    <property type="match status" value="1"/>
</dbReference>
<dbReference type="InterPro" id="IPR003372">
    <property type="entry name" value="PSII_PsbL"/>
</dbReference>
<dbReference type="InterPro" id="IPR037266">
    <property type="entry name" value="PSII_PsbL_sf"/>
</dbReference>
<dbReference type="NCBIfam" id="NF001972">
    <property type="entry name" value="PRK00753.1"/>
    <property type="match status" value="1"/>
</dbReference>
<dbReference type="Pfam" id="PF02419">
    <property type="entry name" value="PsbL"/>
    <property type="match status" value="1"/>
</dbReference>
<dbReference type="SUPFAM" id="SSF161017">
    <property type="entry name" value="Photosystem II reaction center protein L, PsbL"/>
    <property type="match status" value="1"/>
</dbReference>
<sequence>MSGPNPNKEPVDLNRTSLFWGLLLIFVLAVLFSSYFFN</sequence>
<organism>
    <name type="scientific">Porphyra purpurea</name>
    <name type="common">Red seaweed</name>
    <name type="synonym">Ulva purpurea</name>
    <dbReference type="NCBI Taxonomy" id="2787"/>
    <lineage>
        <taxon>Eukaryota</taxon>
        <taxon>Rhodophyta</taxon>
        <taxon>Bangiophyceae</taxon>
        <taxon>Bangiales</taxon>
        <taxon>Bangiaceae</taxon>
        <taxon>Porphyra</taxon>
    </lineage>
</organism>
<geneLocation type="chloroplast"/>
<reference key="1">
    <citation type="journal article" date="1995" name="Plant Mol. Biol. Rep.">
        <title>Complete nucleotide sequence of the Porphyra purpurea chloroplast genome.</title>
        <authorList>
            <person name="Reith M.E."/>
            <person name="Munholland J."/>
        </authorList>
    </citation>
    <scope>NUCLEOTIDE SEQUENCE [LARGE SCALE GENOMIC DNA]</scope>
    <source>
        <strain>Avonport</strain>
    </source>
</reference>
<gene>
    <name evidence="1" type="primary">psbL</name>
</gene>
<proteinExistence type="inferred from homology"/>
<protein>
    <recommendedName>
        <fullName evidence="1">Photosystem II reaction center protein L</fullName>
        <shortName evidence="1">PSII-L</shortName>
    </recommendedName>
</protein>
<comment type="function">
    <text evidence="1">One of the components of the core complex of photosystem II (PSII). PSII is a light-driven water:plastoquinone oxidoreductase that uses light energy to abstract electrons from H(2)O, generating O(2) and a proton gradient subsequently used for ATP formation. It consists of a core antenna complex that captures photons, and an electron transfer chain that converts photonic excitation into a charge separation. This subunit is found at the monomer-monomer interface and is required for correct PSII assembly and/or dimerization.</text>
</comment>
<comment type="subunit">
    <text evidence="1">PSII is composed of 1 copy each of membrane proteins PsbA, PsbB, PsbC, PsbD, PsbE, PsbF, PsbH, PsbI, PsbJ, PsbK, PsbL, PsbM, PsbT, PsbX, PsbY, PsbZ, Psb30/Ycf12, at least 3 peripheral proteins of the oxygen-evolving complex and a large number of cofactors. It forms dimeric complexes.</text>
</comment>
<comment type="subcellular location">
    <subcellularLocation>
        <location evidence="1">Plastid</location>
        <location evidence="1">Chloroplast thylakoid membrane</location>
        <topology evidence="1">Single-pass membrane protein</topology>
    </subcellularLocation>
</comment>
<comment type="similarity">
    <text evidence="1">Belongs to the PsbL family.</text>
</comment>
<keyword id="KW-0150">Chloroplast</keyword>
<keyword id="KW-0472">Membrane</keyword>
<keyword id="KW-0602">Photosynthesis</keyword>
<keyword id="KW-0604">Photosystem II</keyword>
<keyword id="KW-0934">Plastid</keyword>
<keyword id="KW-0674">Reaction center</keyword>
<keyword id="KW-0793">Thylakoid</keyword>
<keyword id="KW-0812">Transmembrane</keyword>
<keyword id="KW-1133">Transmembrane helix</keyword>